<organism>
    <name type="scientific">Staphylococcus aureus</name>
    <dbReference type="NCBI Taxonomy" id="1280"/>
    <lineage>
        <taxon>Bacteria</taxon>
        <taxon>Bacillati</taxon>
        <taxon>Bacillota</taxon>
        <taxon>Bacilli</taxon>
        <taxon>Bacillales</taxon>
        <taxon>Staphylococcaceae</taxon>
        <taxon>Staphylococcus</taxon>
    </lineage>
</organism>
<proteinExistence type="evidence at protein level"/>
<name>BLAI_STAAU</name>
<accession>P0A042</accession>
<accession>P18415</accession>
<gene>
    <name type="primary">blaI</name>
    <name type="synonym">penI</name>
</gene>
<keyword id="KW-0002">3D-structure</keyword>
<keyword id="KW-0046">Antibiotic resistance</keyword>
<keyword id="KW-0963">Cytoplasm</keyword>
<keyword id="KW-0903">Direct protein sequencing</keyword>
<keyword id="KW-0238">DNA-binding</keyword>
<keyword id="KW-0614">Plasmid</keyword>
<keyword id="KW-0678">Repressor</keyword>
<keyword id="KW-0804">Transcription</keyword>
<keyword id="KW-0805">Transcription regulation</keyword>
<keyword id="KW-0814">Transposable element</keyword>
<reference key="1">
    <citation type="journal article" date="1990" name="Mol. Microbiol.">
        <title>Tn552, a novel transposable element from Staphylococcus aureus.</title>
        <authorList>
            <person name="Rowland S.J."/>
            <person name="Dyke K.G.H."/>
        </authorList>
    </citation>
    <scope>NUCLEOTIDE SEQUENCE [GENOMIC DNA]</scope>
    <source>
        <strain>NCTC 9789 / PS80</strain>
        <transposon>Tn552</transposon>
    </source>
</reference>
<reference key="2">
    <citation type="journal article" date="1991" name="Nucleic Acids Res.">
        <title>Nucleotide sequence of beta-lactamase regulatory genes from staphylococcal plasmid pI258.</title>
        <authorList>
            <person name="Wang P.Z."/>
            <person name="Projan S.J."/>
            <person name="Novick R.P."/>
        </authorList>
    </citation>
    <scope>NUCLEOTIDE SEQUENCE [GENOMIC DNA]</scope>
</reference>
<reference key="3">
    <citation type="journal article" date="1992" name="Antimicrob. Agents Chemother.">
        <title>Sequence analysis of the beta-lactamase repressor from Staphylococcus aureus and hybridization studies with two beta-lactamase-producing isolates of Enterococcus faecalis.</title>
        <authorList>
            <person name="Smith M.C."/>
            <person name="Murray B.E."/>
        </authorList>
    </citation>
    <scope>NUCLEOTIDE SEQUENCE [GENOMIC DNA]</scope>
    <source>
        <strain>RN4</strain>
    </source>
</reference>
<reference key="4">
    <citation type="journal article" date="2001" name="Science">
        <title>A proteolytic transmembrane signaling pathway and resistance to beta-lactams in staphylococci.</title>
        <authorList>
            <person name="Zhang H.Z."/>
            <person name="Hackbarth C.J."/>
            <person name="Chansky K.M."/>
            <person name="Chambers H.F."/>
        </authorList>
    </citation>
    <scope>PROTEIN SEQUENCE OF 102-110</scope>
    <scope>INACTIVATION BY PROTEOLYTIC CLEAVAGE</scope>
    <scope>MUTAGENESIS OF 101-ASN-PHE-102</scope>
</reference>
<reference key="5">
    <citation type="journal article" date="1999" name="FEMS Microbiol. Lett.">
        <title>Proteolytic cleavage of the repressor (BlaI) of beta-lactamase synthesis in Staphylococcus aureus.</title>
        <authorList>
            <person name="Lewis R.A."/>
            <person name="Curnock S.P."/>
            <person name="Dyke K.G.H."/>
        </authorList>
    </citation>
    <scope>INACTIVATION BY PROTEOLYTIC CLEAVAGE</scope>
</reference>
<reference key="6">
    <citation type="journal article" date="2005" name="J. Bacteriol.">
        <title>Crystal structures of the BlaI repressor from Staphylococcus aureus and its complex with DNA: insights into transcriptional regulation of the bla and mec operons.</title>
        <authorList>
            <person name="Safo M.K."/>
            <person name="Zhao Q."/>
            <person name="Ko T.-P."/>
            <person name="Musayev F.N."/>
            <person name="Robinson H."/>
            <person name="Scarsdale N."/>
            <person name="Wang A.H.-J."/>
            <person name="Archer G.L."/>
        </authorList>
    </citation>
    <scope>X-RAY CRYSTALLOGRAPHY (2.0 ANGSTROMS) IN COMPLEX WITH DNA</scope>
    <scope>SUBUNIT</scope>
</reference>
<sequence>MANKQVEISMAEWDVMNIIWGKKSVSANEIVVEIQKYKEVSDKTIRTLITRLYKKEIIKRYKSENIYFYSSNIKEDDIKMKTAKTFLNKLYGGDMKSLVLNFAKNEELNNKEIEELRDILNDISKK</sequence>
<comment type="function">
    <text evidence="1">Transcriptional repressor that constitutively blocks expression of beta-lactamase. Binds DNA as a dimer (By similarity).</text>
</comment>
<comment type="subunit">
    <text evidence="3">Homodimer.</text>
</comment>
<comment type="subcellular location">
    <subcellularLocation>
        <location evidence="4">Cytoplasm</location>
    </subcellularLocation>
</comment>
<comment type="PTM">
    <text>Upon exposure to beta-lactams, the protease BlaR1 is activated and cleaves BlaI at a single site. This proteolytic cleavage impairs dimerization and abolishes repressor activity.</text>
</comment>
<comment type="similarity">
    <text evidence="4">Belongs to the BlaI transcriptional regulatory family.</text>
</comment>
<feature type="chain" id="PRO_0000062793" description="Penicillinase repressor">
    <location>
        <begin position="1"/>
        <end position="126"/>
    </location>
</feature>
<feature type="DNA-binding region" description="H-T-H motif" evidence="1">
    <location>
        <begin position="7"/>
        <end position="71"/>
    </location>
</feature>
<feature type="region of interest" description="Important for dimerization" evidence="1">
    <location>
        <begin position="74"/>
        <end position="126"/>
    </location>
</feature>
<feature type="site" description="Cleavage">
    <location>
        <begin position="101"/>
        <end position="102"/>
    </location>
</feature>
<feature type="mutagenesis site" description="Abolishes proteolytic cleavage." evidence="2">
    <original>NF</original>
    <variation>AA</variation>
    <location>
        <begin position="101"/>
        <end position="102"/>
    </location>
</feature>
<feature type="helix" evidence="5">
    <location>
        <begin position="10"/>
        <end position="21"/>
    </location>
</feature>
<feature type="strand" evidence="5">
    <location>
        <begin position="22"/>
        <end position="26"/>
    </location>
</feature>
<feature type="helix" evidence="5">
    <location>
        <begin position="27"/>
        <end position="35"/>
    </location>
</feature>
<feature type="helix" evidence="5">
    <location>
        <begin position="42"/>
        <end position="54"/>
    </location>
</feature>
<feature type="strand" evidence="5">
    <location>
        <begin position="57"/>
        <end position="63"/>
    </location>
</feature>
<feature type="strand" evidence="5">
    <location>
        <begin position="66"/>
        <end position="71"/>
    </location>
</feature>
<feature type="helix" evidence="5">
    <location>
        <begin position="75"/>
        <end position="91"/>
    </location>
</feature>
<feature type="helix" evidence="5">
    <location>
        <begin position="95"/>
        <end position="104"/>
    </location>
</feature>
<feature type="helix" evidence="5">
    <location>
        <begin position="110"/>
        <end position="123"/>
    </location>
</feature>
<geneLocation type="plasmid">
    <name>pI258</name>
</geneLocation>
<dbReference type="EMBL" id="X52734">
    <property type="protein sequence ID" value="CAA36951.1"/>
    <property type="molecule type" value="Genomic_DNA"/>
</dbReference>
<dbReference type="EMBL" id="M62650">
    <property type="protein sequence ID" value="AAA26603.1"/>
    <property type="molecule type" value="Genomic_DNA"/>
</dbReference>
<dbReference type="EMBL" id="M92376">
    <property type="protein sequence ID" value="AAA26605.1"/>
    <property type="molecule type" value="Genomic_DNA"/>
</dbReference>
<dbReference type="PIR" id="S11782">
    <property type="entry name" value="S11782"/>
</dbReference>
<dbReference type="RefSeq" id="NP_878025.1">
    <property type="nucleotide sequence ID" value="NC_005054.1"/>
</dbReference>
<dbReference type="RefSeq" id="WP_001284656.1">
    <property type="nucleotide sequence ID" value="NZ_WWCF01000102.1"/>
</dbReference>
<dbReference type="RefSeq" id="YP_003329486.1">
    <property type="nucleotide sequence ID" value="NC_013550.1"/>
</dbReference>
<dbReference type="RefSeq" id="YP_006937604.1">
    <property type="nucleotide sequence ID" value="NC_013319.1"/>
</dbReference>
<dbReference type="RefSeq" id="YP_006937749.1">
    <property type="nucleotide sequence ID" value="NC_013323.1"/>
</dbReference>
<dbReference type="RefSeq" id="YP_006938265.1">
    <property type="nucleotide sequence ID" value="NC_013337.1"/>
</dbReference>
<dbReference type="RefSeq" id="YP_006938772.1">
    <property type="nucleotide sequence ID" value="NC_013352.1"/>
</dbReference>
<dbReference type="RefSeq" id="YP_008709797.1">
    <property type="nucleotide sequence ID" value="NC_022598.1"/>
</dbReference>
<dbReference type="PDB" id="1SD4">
    <property type="method" value="X-ray"/>
    <property type="resolution" value="2.00 A"/>
    <property type="chains" value="A/B=3-126"/>
</dbReference>
<dbReference type="PDB" id="1XSD">
    <property type="method" value="X-ray"/>
    <property type="resolution" value="2.70 A"/>
    <property type="chains" value="A=3-126"/>
</dbReference>
<dbReference type="PDBsum" id="1SD4"/>
<dbReference type="PDBsum" id="1XSD"/>
<dbReference type="SMR" id="P0A042"/>
<dbReference type="GeneID" id="93824213"/>
<dbReference type="OMA" id="ERLDGMC"/>
<dbReference type="OrthoDB" id="1849040at2"/>
<dbReference type="EvolutionaryTrace" id="P0A042"/>
<dbReference type="GO" id="GO:0005737">
    <property type="term" value="C:cytoplasm"/>
    <property type="evidence" value="ECO:0007669"/>
    <property type="project" value="UniProtKB-SubCell"/>
</dbReference>
<dbReference type="GO" id="GO:0003677">
    <property type="term" value="F:DNA binding"/>
    <property type="evidence" value="ECO:0007669"/>
    <property type="project" value="UniProtKB-KW"/>
</dbReference>
<dbReference type="GO" id="GO:0045892">
    <property type="term" value="P:negative regulation of DNA-templated transcription"/>
    <property type="evidence" value="ECO:0007669"/>
    <property type="project" value="InterPro"/>
</dbReference>
<dbReference type="GO" id="GO:0010468">
    <property type="term" value="P:regulation of gene expression"/>
    <property type="evidence" value="ECO:0000314"/>
    <property type="project" value="CACAO"/>
</dbReference>
<dbReference type="GO" id="GO:0046677">
    <property type="term" value="P:response to antibiotic"/>
    <property type="evidence" value="ECO:0007669"/>
    <property type="project" value="UniProtKB-KW"/>
</dbReference>
<dbReference type="Gene3D" id="1.10.4040.10">
    <property type="entry name" value="Penicillinase repressor domain"/>
    <property type="match status" value="1"/>
</dbReference>
<dbReference type="Gene3D" id="1.10.10.10">
    <property type="entry name" value="Winged helix-like DNA-binding domain superfamily/Winged helix DNA-binding domain"/>
    <property type="match status" value="1"/>
</dbReference>
<dbReference type="InterPro" id="IPR005650">
    <property type="entry name" value="BlaI_family"/>
</dbReference>
<dbReference type="InterPro" id="IPR036388">
    <property type="entry name" value="WH-like_DNA-bd_sf"/>
</dbReference>
<dbReference type="InterPro" id="IPR036390">
    <property type="entry name" value="WH_DNA-bd_sf"/>
</dbReference>
<dbReference type="NCBIfam" id="NF000186">
    <property type="entry name" value="BlaI_of_MRSA"/>
    <property type="match status" value="1"/>
</dbReference>
<dbReference type="Pfam" id="PF03965">
    <property type="entry name" value="Penicillinase_R"/>
    <property type="match status" value="1"/>
</dbReference>
<dbReference type="PIRSF" id="PIRSF019455">
    <property type="entry name" value="CopR_AtkY"/>
    <property type="match status" value="1"/>
</dbReference>
<dbReference type="SUPFAM" id="SSF46785">
    <property type="entry name" value="Winged helix' DNA-binding domain"/>
    <property type="match status" value="1"/>
</dbReference>
<evidence type="ECO:0000250" key="1"/>
<evidence type="ECO:0000269" key="2">
    <source>
    </source>
</evidence>
<evidence type="ECO:0000269" key="3">
    <source>
    </source>
</evidence>
<evidence type="ECO:0000305" key="4"/>
<evidence type="ECO:0007829" key="5">
    <source>
        <dbReference type="PDB" id="1SD4"/>
    </source>
</evidence>
<protein>
    <recommendedName>
        <fullName>Penicillinase repressor</fullName>
    </recommendedName>
    <alternativeName>
        <fullName>Beta-lactamase repressor protein</fullName>
    </alternativeName>
    <alternativeName>
        <fullName>Regulatory protein BlaI</fullName>
    </alternativeName>
</protein>